<feature type="chain" id="PRO_0000117015" description="Adenosylhomocysteinase">
    <location>
        <begin position="1"/>
        <end position="417"/>
    </location>
</feature>
<feature type="binding site" evidence="1">
    <location>
        <position position="53"/>
    </location>
    <ligand>
        <name>substrate</name>
    </ligand>
</feature>
<feature type="binding site" evidence="1">
    <location>
        <position position="125"/>
    </location>
    <ligand>
        <name>substrate</name>
    </ligand>
</feature>
<feature type="binding site" evidence="1">
    <location>
        <position position="149"/>
    </location>
    <ligand>
        <name>substrate</name>
    </ligand>
</feature>
<feature type="binding site" evidence="1">
    <location>
        <begin position="150"/>
        <end position="152"/>
    </location>
    <ligand>
        <name>NAD(+)</name>
        <dbReference type="ChEBI" id="CHEBI:57540"/>
    </ligand>
</feature>
<feature type="binding site" evidence="1">
    <location>
        <position position="179"/>
    </location>
    <ligand>
        <name>substrate</name>
    </ligand>
</feature>
<feature type="binding site" evidence="1">
    <location>
        <position position="183"/>
    </location>
    <ligand>
        <name>substrate</name>
    </ligand>
</feature>
<feature type="binding site" evidence="1">
    <location>
        <position position="184"/>
    </location>
    <ligand>
        <name>NAD(+)</name>
        <dbReference type="ChEBI" id="CHEBI:57540"/>
    </ligand>
</feature>
<feature type="binding site" evidence="1">
    <location>
        <begin position="213"/>
        <end position="218"/>
    </location>
    <ligand>
        <name>NAD(+)</name>
        <dbReference type="ChEBI" id="CHEBI:57540"/>
    </ligand>
</feature>
<feature type="binding site" evidence="1">
    <location>
        <position position="236"/>
    </location>
    <ligand>
        <name>NAD(+)</name>
        <dbReference type="ChEBI" id="CHEBI:57540"/>
    </ligand>
</feature>
<feature type="binding site" evidence="1">
    <location>
        <position position="271"/>
    </location>
    <ligand>
        <name>NAD(+)</name>
        <dbReference type="ChEBI" id="CHEBI:57540"/>
    </ligand>
</feature>
<feature type="binding site" evidence="1">
    <location>
        <begin position="292"/>
        <end position="294"/>
    </location>
    <ligand>
        <name>NAD(+)</name>
        <dbReference type="ChEBI" id="CHEBI:57540"/>
    </ligand>
</feature>
<feature type="binding site" evidence="1">
    <location>
        <position position="339"/>
    </location>
    <ligand>
        <name>NAD(+)</name>
        <dbReference type="ChEBI" id="CHEBI:57540"/>
    </ligand>
</feature>
<gene>
    <name evidence="1" type="primary">ahcY</name>
    <name type="ordered locus">SSO0755</name>
</gene>
<comment type="function">
    <text evidence="1">May play a key role in the regulation of the intracellular concentration of adenosylhomocysteine.</text>
</comment>
<comment type="catalytic activity">
    <reaction evidence="1">
        <text>S-adenosyl-L-homocysteine + H2O = L-homocysteine + adenosine</text>
        <dbReference type="Rhea" id="RHEA:21708"/>
        <dbReference type="ChEBI" id="CHEBI:15377"/>
        <dbReference type="ChEBI" id="CHEBI:16335"/>
        <dbReference type="ChEBI" id="CHEBI:57856"/>
        <dbReference type="ChEBI" id="CHEBI:58199"/>
        <dbReference type="EC" id="3.13.2.1"/>
    </reaction>
</comment>
<comment type="cofactor">
    <cofactor evidence="1">
        <name>NAD(+)</name>
        <dbReference type="ChEBI" id="CHEBI:57540"/>
    </cofactor>
    <text evidence="1">Binds 1 NAD(+) per subunit.</text>
</comment>
<comment type="pathway">
    <text evidence="1">Amino-acid biosynthesis; L-homocysteine biosynthesis; L-homocysteine from S-adenosyl-L-homocysteine: step 1/1.</text>
</comment>
<comment type="subcellular location">
    <subcellularLocation>
        <location evidence="1">Cytoplasm</location>
    </subcellularLocation>
</comment>
<comment type="similarity">
    <text evidence="1">Belongs to the adenosylhomocysteinase family.</text>
</comment>
<comment type="sequence caution" evidence="2">
    <conflict type="erroneous initiation">
        <sequence resource="EMBL-CDS" id="AAK41050"/>
    </conflict>
</comment>
<comment type="sequence caution" evidence="2">
    <conflict type="erroneous initiation">
        <sequence resource="EMBL-CDS" id="CAB57547"/>
    </conflict>
</comment>
<dbReference type="EC" id="3.13.2.1" evidence="1"/>
<dbReference type="EMBL" id="Z50174">
    <property type="protein sequence ID" value="CAA90536.1"/>
    <property type="molecule type" value="Genomic_DNA"/>
</dbReference>
<dbReference type="EMBL" id="Y18930">
    <property type="protein sequence ID" value="CAB57547.1"/>
    <property type="status" value="ALT_INIT"/>
    <property type="molecule type" value="Genomic_DNA"/>
</dbReference>
<dbReference type="EMBL" id="AE006641">
    <property type="protein sequence ID" value="AAK41050.1"/>
    <property type="status" value="ALT_INIT"/>
    <property type="molecule type" value="Genomic_DNA"/>
</dbReference>
<dbReference type="PIR" id="C90224">
    <property type="entry name" value="C90224"/>
</dbReference>
<dbReference type="PIR" id="JC5156">
    <property type="entry name" value="S58193"/>
</dbReference>
<dbReference type="RefSeq" id="WP_009991332.1">
    <property type="nucleotide sequence ID" value="NC_002754.1"/>
</dbReference>
<dbReference type="SMR" id="P50252"/>
<dbReference type="FunCoup" id="P50252">
    <property type="interactions" value="192"/>
</dbReference>
<dbReference type="STRING" id="273057.SSO0755"/>
<dbReference type="PaxDb" id="273057-SSO0755"/>
<dbReference type="EnsemblBacteria" id="AAK41050">
    <property type="protein sequence ID" value="AAK41050"/>
    <property type="gene ID" value="SSO0755"/>
</dbReference>
<dbReference type="GeneID" id="44129752"/>
<dbReference type="KEGG" id="sso:SSO0755"/>
<dbReference type="PATRIC" id="fig|273057.12.peg.752"/>
<dbReference type="eggNOG" id="arCOG04137">
    <property type="taxonomic scope" value="Archaea"/>
</dbReference>
<dbReference type="HOGENOM" id="CLU_025194_2_1_2"/>
<dbReference type="InParanoid" id="P50252"/>
<dbReference type="PhylomeDB" id="P50252"/>
<dbReference type="BRENDA" id="3.3.1.1">
    <property type="organism ID" value="6163"/>
</dbReference>
<dbReference type="UniPathway" id="UPA00314">
    <property type="reaction ID" value="UER00076"/>
</dbReference>
<dbReference type="Proteomes" id="UP000001974">
    <property type="component" value="Chromosome"/>
</dbReference>
<dbReference type="GO" id="GO:0005829">
    <property type="term" value="C:cytosol"/>
    <property type="evidence" value="ECO:0000318"/>
    <property type="project" value="GO_Central"/>
</dbReference>
<dbReference type="GO" id="GO:0004013">
    <property type="term" value="F:adenosylhomocysteinase activity"/>
    <property type="evidence" value="ECO:0000318"/>
    <property type="project" value="GO_Central"/>
</dbReference>
<dbReference type="GO" id="GO:0071269">
    <property type="term" value="P:L-homocysteine biosynthetic process"/>
    <property type="evidence" value="ECO:0007669"/>
    <property type="project" value="UniProtKB-UniRule"/>
</dbReference>
<dbReference type="GO" id="GO:0006730">
    <property type="term" value="P:one-carbon metabolic process"/>
    <property type="evidence" value="ECO:0007669"/>
    <property type="project" value="UniProtKB-KW"/>
</dbReference>
<dbReference type="GO" id="GO:0033353">
    <property type="term" value="P:S-adenosylmethionine cycle"/>
    <property type="evidence" value="ECO:0000318"/>
    <property type="project" value="GO_Central"/>
</dbReference>
<dbReference type="CDD" id="cd00401">
    <property type="entry name" value="SAHH"/>
    <property type="match status" value="1"/>
</dbReference>
<dbReference type="FunFam" id="3.40.50.720:FF:000004">
    <property type="entry name" value="Adenosylhomocysteinase"/>
    <property type="match status" value="1"/>
</dbReference>
<dbReference type="Gene3D" id="3.40.50.1480">
    <property type="entry name" value="Adenosylhomocysteinase-like"/>
    <property type="match status" value="1"/>
</dbReference>
<dbReference type="Gene3D" id="3.40.50.720">
    <property type="entry name" value="NAD(P)-binding Rossmann-like Domain"/>
    <property type="match status" value="1"/>
</dbReference>
<dbReference type="HAMAP" id="MF_00563">
    <property type="entry name" value="AdoHcyase"/>
    <property type="match status" value="1"/>
</dbReference>
<dbReference type="InterPro" id="IPR042172">
    <property type="entry name" value="Adenosylhomocyst_ase-like_sf"/>
</dbReference>
<dbReference type="InterPro" id="IPR000043">
    <property type="entry name" value="Adenosylhomocysteinase-like"/>
</dbReference>
<dbReference type="InterPro" id="IPR015878">
    <property type="entry name" value="Ado_hCys_hydrolase_NAD-bd"/>
</dbReference>
<dbReference type="InterPro" id="IPR036291">
    <property type="entry name" value="NAD(P)-bd_dom_sf"/>
</dbReference>
<dbReference type="InterPro" id="IPR020082">
    <property type="entry name" value="S-Ado-L-homoCys_hydrolase_CS"/>
</dbReference>
<dbReference type="NCBIfam" id="TIGR00936">
    <property type="entry name" value="ahcY"/>
    <property type="match status" value="1"/>
</dbReference>
<dbReference type="NCBIfam" id="NF004005">
    <property type="entry name" value="PRK05476.2-3"/>
    <property type="match status" value="1"/>
</dbReference>
<dbReference type="PANTHER" id="PTHR23420">
    <property type="entry name" value="ADENOSYLHOMOCYSTEINASE"/>
    <property type="match status" value="1"/>
</dbReference>
<dbReference type="PANTHER" id="PTHR23420:SF0">
    <property type="entry name" value="ADENOSYLHOMOCYSTEINASE"/>
    <property type="match status" value="1"/>
</dbReference>
<dbReference type="Pfam" id="PF05221">
    <property type="entry name" value="AdoHcyase"/>
    <property type="match status" value="2"/>
</dbReference>
<dbReference type="Pfam" id="PF00670">
    <property type="entry name" value="AdoHcyase_NAD"/>
    <property type="match status" value="1"/>
</dbReference>
<dbReference type="PIRSF" id="PIRSF001109">
    <property type="entry name" value="Ad_hcy_hydrolase"/>
    <property type="match status" value="1"/>
</dbReference>
<dbReference type="SMART" id="SM00996">
    <property type="entry name" value="AdoHcyase"/>
    <property type="match status" value="1"/>
</dbReference>
<dbReference type="SMART" id="SM00997">
    <property type="entry name" value="AdoHcyase_NAD"/>
    <property type="match status" value="1"/>
</dbReference>
<dbReference type="SUPFAM" id="SSF52283">
    <property type="entry name" value="Formate/glycerate dehydrogenase catalytic domain-like"/>
    <property type="match status" value="1"/>
</dbReference>
<dbReference type="SUPFAM" id="SSF51735">
    <property type="entry name" value="NAD(P)-binding Rossmann-fold domains"/>
    <property type="match status" value="1"/>
</dbReference>
<dbReference type="PROSITE" id="PS00738">
    <property type="entry name" value="ADOHCYASE_1"/>
    <property type="match status" value="1"/>
</dbReference>
<dbReference type="PROSITE" id="PS00739">
    <property type="entry name" value="ADOHCYASE_2"/>
    <property type="match status" value="1"/>
</dbReference>
<protein>
    <recommendedName>
        <fullName evidence="1">Adenosylhomocysteinase</fullName>
        <ecNumber evidence="1">3.13.2.1</ecNumber>
    </recommendedName>
    <alternativeName>
        <fullName evidence="1">S-adenosyl-L-homocysteine hydrolase</fullName>
        <shortName evidence="1">AdoHcyase</shortName>
    </alternativeName>
</protein>
<name>SAHH_SACS2</name>
<proteinExistence type="inferred from homology"/>
<keyword id="KW-0963">Cytoplasm</keyword>
<keyword id="KW-0378">Hydrolase</keyword>
<keyword id="KW-0520">NAD</keyword>
<keyword id="KW-0554">One-carbon metabolism</keyword>
<keyword id="KW-1185">Reference proteome</keyword>
<sequence length="417" mass="45965">MSYKIKDLSLASEGKKQIEWAERHMPTLMEIRKRFKAEKPLKGINISAVLHVTKETAALVKTLKIGGANVALAGSNPLSTQDDVAAALVEEGISVFAWKGENETEYYSNIESIVKIHEPNIVMDDGADLHAYIHEKVSSKLDIYGGTEETTTGVIRLKAMEKDGVLKYPLVAVNNAYTKYLFDNRYGTGQSAIDGILRATNILIAGKIAVVAGYGWVGRGIANRLRGMGARVIVTEVDPIRALEAVMDGFDVMPIAEASKVGDIFVTATGNTKAIRVEHMLNMKDGAILSNAGHFNVEVDVKGLKETAVKVRNIRPYVDEYTLPNGKRVYLLADGRLVNLAAAEGHPSEVMDMSFANQALAVEYLVKNRGKLEKKVYNMPMELDYEVARIKLKSMGIQIDELTEEQKEYLEQWKSGT</sequence>
<evidence type="ECO:0000255" key="1">
    <source>
        <dbReference type="HAMAP-Rule" id="MF_00563"/>
    </source>
</evidence>
<evidence type="ECO:0000305" key="2"/>
<accession>P50252</accession>
<accession>Q9UXE3</accession>
<reference key="1">
    <citation type="journal article" date="1996" name="Gene">
        <title>Cloning and sequencing of the gene coding for S-adenosylhomocysteine hydrolase in the thermophilic archaeon Sulfolobus solfataricus.</title>
        <authorList>
            <person name="Porcelli M."/>
            <person name="Cacciapuoti G."/>
            <person name="Fusco S."/>
            <person name="Bertoldo C."/>
            <person name="de Rosa M."/>
            <person name="Zappia V."/>
        </authorList>
    </citation>
    <scope>NUCLEOTIDE SEQUENCE [GENOMIC DNA]</scope>
    <source>
        <strain>ATCC 35092 / DSM 1617 / JCM 11322 / P2</strain>
    </source>
</reference>
<reference key="2">
    <citation type="journal article" date="2000" name="Genome">
        <title>Gene content and organization of a 281-kbp contig from the genome of the extremely thermophilic archaeon, Sulfolobus solfataricus P2.</title>
        <authorList>
            <person name="Charlebois R.L."/>
            <person name="Singh R.K."/>
            <person name="Chan-Weiher C.C.-Y."/>
            <person name="Allard G."/>
            <person name="Chow C."/>
            <person name="Confalonieri F."/>
            <person name="Curtis B."/>
            <person name="Duguet M."/>
            <person name="Erauso G."/>
            <person name="Faguy D."/>
            <person name="Gaasterland T."/>
            <person name="Garrett R.A."/>
            <person name="Gordon P."/>
            <person name="Jeffries A.C."/>
            <person name="Kozera C."/>
            <person name="Kushwaha N."/>
            <person name="Lafleur E."/>
            <person name="Medina N."/>
            <person name="Peng X."/>
            <person name="Penny S.L."/>
            <person name="She Q."/>
            <person name="St Jean A."/>
            <person name="van der Oost J."/>
            <person name="Young F."/>
            <person name="Zivanovic Y."/>
            <person name="Doolittle W.F."/>
            <person name="Ragan M.A."/>
            <person name="Sensen C.W."/>
        </authorList>
    </citation>
    <scope>NUCLEOTIDE SEQUENCE [LARGE SCALE GENOMIC DNA]</scope>
    <source>
        <strain>ATCC 35092 / DSM 1617 / JCM 11322 / P2</strain>
    </source>
</reference>
<reference key="3">
    <citation type="journal article" date="2001" name="Proc. Natl. Acad. Sci. U.S.A.">
        <title>The complete genome of the crenarchaeon Sulfolobus solfataricus P2.</title>
        <authorList>
            <person name="She Q."/>
            <person name="Singh R.K."/>
            <person name="Confalonieri F."/>
            <person name="Zivanovic Y."/>
            <person name="Allard G."/>
            <person name="Awayez M.J."/>
            <person name="Chan-Weiher C.C.-Y."/>
            <person name="Clausen I.G."/>
            <person name="Curtis B.A."/>
            <person name="De Moors A."/>
            <person name="Erauso G."/>
            <person name="Fletcher C."/>
            <person name="Gordon P.M.K."/>
            <person name="Heikamp-de Jong I."/>
            <person name="Jeffries A.C."/>
            <person name="Kozera C.J."/>
            <person name="Medina N."/>
            <person name="Peng X."/>
            <person name="Thi-Ngoc H.P."/>
            <person name="Redder P."/>
            <person name="Schenk M.E."/>
            <person name="Theriault C."/>
            <person name="Tolstrup N."/>
            <person name="Charlebois R.L."/>
            <person name="Doolittle W.F."/>
            <person name="Duguet M."/>
            <person name="Gaasterland T."/>
            <person name="Garrett R.A."/>
            <person name="Ragan M.A."/>
            <person name="Sensen C.W."/>
            <person name="Van der Oost J."/>
        </authorList>
    </citation>
    <scope>NUCLEOTIDE SEQUENCE [LARGE SCALE GENOMIC DNA]</scope>
    <source>
        <strain>ATCC 35092 / DSM 1617 / JCM 11322 / P2</strain>
    </source>
</reference>
<organism>
    <name type="scientific">Saccharolobus solfataricus (strain ATCC 35092 / DSM 1617 / JCM 11322 / P2)</name>
    <name type="common">Sulfolobus solfataricus</name>
    <dbReference type="NCBI Taxonomy" id="273057"/>
    <lineage>
        <taxon>Archaea</taxon>
        <taxon>Thermoproteota</taxon>
        <taxon>Thermoprotei</taxon>
        <taxon>Sulfolobales</taxon>
        <taxon>Sulfolobaceae</taxon>
        <taxon>Saccharolobus</taxon>
    </lineage>
</organism>